<comment type="function">
    <text evidence="1">Component of the large ribosomal subunit. The ribosome is a large ribonucleoprotein complex responsible for the synthesis of proteins in the cell.</text>
</comment>
<comment type="subunit">
    <text evidence="1">Component of the large ribosomal subunit.</text>
</comment>
<comment type="subcellular location">
    <subcellularLocation>
        <location evidence="1">Cytoplasm</location>
    </subcellularLocation>
</comment>
<comment type="PTM">
    <text evidence="1">Hydroxylated on His-39 by MINA.</text>
</comment>
<comment type="similarity">
    <text evidence="3">Belongs to the universal ribosomal protein uL15 family.</text>
</comment>
<evidence type="ECO:0000250" key="1">
    <source>
        <dbReference type="UniProtKB" id="P46776"/>
    </source>
</evidence>
<evidence type="ECO:0000256" key="2">
    <source>
        <dbReference type="SAM" id="MobiDB-lite"/>
    </source>
</evidence>
<evidence type="ECO:0000305" key="3"/>
<dbReference type="EMBL" id="AB169006">
    <property type="protein sequence ID" value="BAE01101.1"/>
    <property type="molecule type" value="mRNA"/>
</dbReference>
<dbReference type="RefSeq" id="XP_015289610.1">
    <property type="nucleotide sequence ID" value="XM_015434124.1"/>
</dbReference>
<dbReference type="RefSeq" id="XP_045227402.1">
    <property type="nucleotide sequence ID" value="XM_045371467.1"/>
</dbReference>
<dbReference type="SMR" id="Q4R723"/>
<dbReference type="STRING" id="9541.ENSMFAP00000038881"/>
<dbReference type="Ensembl" id="ENSMFAT00000096733.1">
    <property type="protein sequence ID" value="ENSMFAP00000059681.1"/>
    <property type="gene ID" value="ENSMFAG00000053390.1"/>
</dbReference>
<dbReference type="GeneID" id="101925038"/>
<dbReference type="VEuPathDB" id="HostDB:ENSMFAG00000038752"/>
<dbReference type="eggNOG" id="KOG1742">
    <property type="taxonomic scope" value="Eukaryota"/>
</dbReference>
<dbReference type="GeneTree" id="ENSGT00390000005534"/>
<dbReference type="OMA" id="WGRVGQH"/>
<dbReference type="OrthoDB" id="61900at2759"/>
<dbReference type="Proteomes" id="UP000233100">
    <property type="component" value="Chromosome 14"/>
</dbReference>
<dbReference type="GO" id="GO:0022625">
    <property type="term" value="C:cytosolic large ribosomal subunit"/>
    <property type="evidence" value="ECO:0007669"/>
    <property type="project" value="TreeGrafter"/>
</dbReference>
<dbReference type="GO" id="GO:0003735">
    <property type="term" value="F:structural constituent of ribosome"/>
    <property type="evidence" value="ECO:0007669"/>
    <property type="project" value="InterPro"/>
</dbReference>
<dbReference type="GO" id="GO:0006412">
    <property type="term" value="P:translation"/>
    <property type="evidence" value="ECO:0007669"/>
    <property type="project" value="InterPro"/>
</dbReference>
<dbReference type="FunFam" id="3.100.10.10:FF:000024">
    <property type="entry name" value="RPL27A isoform 10"/>
    <property type="match status" value="1"/>
</dbReference>
<dbReference type="Gene3D" id="3.100.10.10">
    <property type="match status" value="1"/>
</dbReference>
<dbReference type="Gene3D" id="4.10.990.10">
    <property type="match status" value="1"/>
</dbReference>
<dbReference type="HAMAP" id="MF_01341">
    <property type="entry name" value="Ribosomal_uL15"/>
    <property type="match status" value="1"/>
</dbReference>
<dbReference type="InterPro" id="IPR027386">
    <property type="entry name" value="Rbsml_uL15_N"/>
</dbReference>
<dbReference type="InterPro" id="IPR030878">
    <property type="entry name" value="Ribosomal_uL15"/>
</dbReference>
<dbReference type="InterPro" id="IPR021131">
    <property type="entry name" value="Ribosomal_uL15/eL18"/>
</dbReference>
<dbReference type="InterPro" id="IPR036227">
    <property type="entry name" value="Ribosomal_uL15/eL18_sf"/>
</dbReference>
<dbReference type="InterPro" id="IPR001196">
    <property type="entry name" value="Ribosomal_uL15_CS"/>
</dbReference>
<dbReference type="PANTHER" id="PTHR11721">
    <property type="entry name" value="60S RIBOSOMAL PROTEIN L27A"/>
    <property type="match status" value="1"/>
</dbReference>
<dbReference type="PANTHER" id="PTHR11721:SF3">
    <property type="entry name" value="LARGE RIBOSOMAL SUBUNIT PROTEIN UL15"/>
    <property type="match status" value="1"/>
</dbReference>
<dbReference type="Pfam" id="PF00828">
    <property type="entry name" value="Ribosomal_L27A"/>
    <property type="match status" value="1"/>
</dbReference>
<dbReference type="SUPFAM" id="SSF52080">
    <property type="entry name" value="Ribosomal proteins L15p and L18e"/>
    <property type="match status" value="1"/>
</dbReference>
<dbReference type="PROSITE" id="PS00475">
    <property type="entry name" value="RIBOSOMAL_L15"/>
    <property type="match status" value="1"/>
</dbReference>
<reference key="1">
    <citation type="submission" date="2005-06" db="EMBL/GenBank/DDBJ databases">
        <title>DNA sequences of macaque genes expressed in brain or testis and its evolutionary implications.</title>
        <authorList>
            <consortium name="International consortium for macaque cDNA sequencing and analysis"/>
        </authorList>
    </citation>
    <scope>NUCLEOTIDE SEQUENCE [LARGE SCALE MRNA]</scope>
    <source>
        <tissue>Testis</tissue>
    </source>
</reference>
<organism>
    <name type="scientific">Macaca fascicularis</name>
    <name type="common">Crab-eating macaque</name>
    <name type="synonym">Cynomolgus monkey</name>
    <dbReference type="NCBI Taxonomy" id="9541"/>
    <lineage>
        <taxon>Eukaryota</taxon>
        <taxon>Metazoa</taxon>
        <taxon>Chordata</taxon>
        <taxon>Craniata</taxon>
        <taxon>Vertebrata</taxon>
        <taxon>Euteleostomi</taxon>
        <taxon>Mammalia</taxon>
        <taxon>Eutheria</taxon>
        <taxon>Euarchontoglires</taxon>
        <taxon>Primates</taxon>
        <taxon>Haplorrhini</taxon>
        <taxon>Catarrhini</taxon>
        <taxon>Cercopithecidae</taxon>
        <taxon>Cercopithecinae</taxon>
        <taxon>Macaca</taxon>
    </lineage>
</organism>
<keyword id="KW-0007">Acetylation</keyword>
<keyword id="KW-0963">Cytoplasm</keyword>
<keyword id="KW-0379">Hydroxylation</keyword>
<keyword id="KW-0597">Phosphoprotein</keyword>
<keyword id="KW-1185">Reference proteome</keyword>
<keyword id="KW-0687">Ribonucleoprotein</keyword>
<keyword id="KW-0689">Ribosomal protein</keyword>
<protein>
    <recommendedName>
        <fullName evidence="3">Large ribosomal subunit protein uL15</fullName>
    </recommendedName>
    <alternativeName>
        <fullName>60S ribosomal protein L27a</fullName>
    </alternativeName>
</protein>
<accession>Q4R723</accession>
<proteinExistence type="evidence at transcript level"/>
<name>RL27A_MACFA</name>
<sequence>MPSRLRKTRKLRGHVSHGHGRIGKHRKHPGGRGNAGGLHHHRINFDKYHPGYFGKVGMRHYHLKRNQSFCPTVNLDKLWTLVSEQTRVNAAKNKTGAAPIIDVVRSGYYKVLGKGKLPKQPVIVKAKFFSRRAEEKIKGVGGACVLVA</sequence>
<gene>
    <name type="primary">RPL27A</name>
    <name type="ORF">QtsA-16525</name>
</gene>
<feature type="chain" id="PRO_0000319301" description="Large ribosomal subunit protein uL15">
    <location>
        <begin position="1"/>
        <end position="148"/>
    </location>
</feature>
<feature type="region of interest" description="Disordered" evidence="2">
    <location>
        <begin position="1"/>
        <end position="39"/>
    </location>
</feature>
<feature type="compositionally biased region" description="Basic residues" evidence="2">
    <location>
        <begin position="1"/>
        <end position="30"/>
    </location>
</feature>
<feature type="modified residue" description="(3S)-3-hydroxyhistidine" evidence="1">
    <location>
        <position position="39"/>
    </location>
</feature>
<feature type="modified residue" description="N6-acetyllysine" evidence="1">
    <location>
        <position position="47"/>
    </location>
</feature>
<feature type="modified residue" description="N6-acetyllysine" evidence="1">
    <location>
        <position position="55"/>
    </location>
</feature>
<feature type="modified residue" description="Phosphoserine" evidence="1">
    <location>
        <position position="68"/>
    </location>
</feature>
<feature type="modified residue" description="N6-acetyllysine" evidence="1">
    <location>
        <position position="110"/>
    </location>
</feature>